<reference key="1">
    <citation type="submission" date="2006-04" db="EMBL/GenBank/DDBJ databases">
        <title>Complete sequence of chromosome of Deinococcus geothermalis DSM 11300.</title>
        <authorList>
            <person name="Copeland A."/>
            <person name="Lucas S."/>
            <person name="Lapidus A."/>
            <person name="Barry K."/>
            <person name="Detter J.C."/>
            <person name="Glavina del Rio T."/>
            <person name="Hammon N."/>
            <person name="Israni S."/>
            <person name="Dalin E."/>
            <person name="Tice H."/>
            <person name="Pitluck S."/>
            <person name="Brettin T."/>
            <person name="Bruce D."/>
            <person name="Han C."/>
            <person name="Tapia R."/>
            <person name="Saunders E."/>
            <person name="Gilna P."/>
            <person name="Schmutz J."/>
            <person name="Larimer F."/>
            <person name="Land M."/>
            <person name="Hauser L."/>
            <person name="Kyrpides N."/>
            <person name="Kim E."/>
            <person name="Daly M.J."/>
            <person name="Fredrickson J.K."/>
            <person name="Makarova K.S."/>
            <person name="Gaidamakova E.K."/>
            <person name="Zhai M."/>
            <person name="Richardson P."/>
        </authorList>
    </citation>
    <scope>NUCLEOTIDE SEQUENCE [LARGE SCALE GENOMIC DNA]</scope>
    <source>
        <strain>DSM 11300 / CIP 105573 / AG-3a</strain>
    </source>
</reference>
<keyword id="KW-1003">Cell membrane</keyword>
<keyword id="KW-0342">GTP-binding</keyword>
<keyword id="KW-0378">Hydrolase</keyword>
<keyword id="KW-0472">Membrane</keyword>
<keyword id="KW-0547">Nucleotide-binding</keyword>
<keyword id="KW-0648">Protein biosynthesis</keyword>
<evidence type="ECO:0000255" key="1">
    <source>
        <dbReference type="HAMAP-Rule" id="MF_00071"/>
    </source>
</evidence>
<organism>
    <name type="scientific">Deinococcus geothermalis (strain DSM 11300 / CIP 105573 / AG-3a)</name>
    <dbReference type="NCBI Taxonomy" id="319795"/>
    <lineage>
        <taxon>Bacteria</taxon>
        <taxon>Thermotogati</taxon>
        <taxon>Deinococcota</taxon>
        <taxon>Deinococci</taxon>
        <taxon>Deinococcales</taxon>
        <taxon>Deinococcaceae</taxon>
        <taxon>Deinococcus</taxon>
    </lineage>
</organism>
<gene>
    <name evidence="1" type="primary">lepA</name>
    <name type="ordered locus">Dgeo_1624</name>
</gene>
<dbReference type="EC" id="3.6.5.n1" evidence="1"/>
<dbReference type="EMBL" id="CP000359">
    <property type="protein sequence ID" value="ABF45919.1"/>
    <property type="molecule type" value="Genomic_DNA"/>
</dbReference>
<dbReference type="RefSeq" id="WP_011530753.1">
    <property type="nucleotide sequence ID" value="NC_008025.1"/>
</dbReference>
<dbReference type="SMR" id="Q1IXW5"/>
<dbReference type="STRING" id="319795.Dgeo_1624"/>
<dbReference type="KEGG" id="dge:Dgeo_1624"/>
<dbReference type="eggNOG" id="COG0481">
    <property type="taxonomic scope" value="Bacteria"/>
</dbReference>
<dbReference type="HOGENOM" id="CLU_009995_3_3_0"/>
<dbReference type="Proteomes" id="UP000002431">
    <property type="component" value="Chromosome"/>
</dbReference>
<dbReference type="GO" id="GO:0005886">
    <property type="term" value="C:plasma membrane"/>
    <property type="evidence" value="ECO:0007669"/>
    <property type="project" value="UniProtKB-SubCell"/>
</dbReference>
<dbReference type="GO" id="GO:0005525">
    <property type="term" value="F:GTP binding"/>
    <property type="evidence" value="ECO:0007669"/>
    <property type="project" value="UniProtKB-UniRule"/>
</dbReference>
<dbReference type="GO" id="GO:0003924">
    <property type="term" value="F:GTPase activity"/>
    <property type="evidence" value="ECO:0007669"/>
    <property type="project" value="UniProtKB-UniRule"/>
</dbReference>
<dbReference type="GO" id="GO:0043022">
    <property type="term" value="F:ribosome binding"/>
    <property type="evidence" value="ECO:0007669"/>
    <property type="project" value="UniProtKB-UniRule"/>
</dbReference>
<dbReference type="GO" id="GO:0003746">
    <property type="term" value="F:translation elongation factor activity"/>
    <property type="evidence" value="ECO:0007669"/>
    <property type="project" value="UniProtKB-UniRule"/>
</dbReference>
<dbReference type="GO" id="GO:0045727">
    <property type="term" value="P:positive regulation of translation"/>
    <property type="evidence" value="ECO:0007669"/>
    <property type="project" value="UniProtKB-UniRule"/>
</dbReference>
<dbReference type="CDD" id="cd03699">
    <property type="entry name" value="EF4_II"/>
    <property type="match status" value="1"/>
</dbReference>
<dbReference type="CDD" id="cd16260">
    <property type="entry name" value="EF4_III"/>
    <property type="match status" value="1"/>
</dbReference>
<dbReference type="CDD" id="cd01890">
    <property type="entry name" value="LepA"/>
    <property type="match status" value="1"/>
</dbReference>
<dbReference type="CDD" id="cd03709">
    <property type="entry name" value="lepA_C"/>
    <property type="match status" value="1"/>
</dbReference>
<dbReference type="FunFam" id="3.40.50.300:FF:000078">
    <property type="entry name" value="Elongation factor 4"/>
    <property type="match status" value="1"/>
</dbReference>
<dbReference type="FunFam" id="2.40.30.10:FF:000015">
    <property type="entry name" value="Translation factor GUF1, mitochondrial"/>
    <property type="match status" value="1"/>
</dbReference>
<dbReference type="FunFam" id="3.30.70.240:FF:000007">
    <property type="entry name" value="Translation factor GUF1, mitochondrial"/>
    <property type="match status" value="1"/>
</dbReference>
<dbReference type="FunFam" id="3.30.70.2570:FF:000001">
    <property type="entry name" value="Translation factor GUF1, mitochondrial"/>
    <property type="match status" value="1"/>
</dbReference>
<dbReference type="FunFam" id="3.30.70.870:FF:000004">
    <property type="entry name" value="Translation factor GUF1, mitochondrial"/>
    <property type="match status" value="1"/>
</dbReference>
<dbReference type="Gene3D" id="3.30.70.240">
    <property type="match status" value="1"/>
</dbReference>
<dbReference type="Gene3D" id="3.30.70.2570">
    <property type="entry name" value="Elongation factor 4, C-terminal domain"/>
    <property type="match status" value="1"/>
</dbReference>
<dbReference type="Gene3D" id="3.30.70.870">
    <property type="entry name" value="Elongation Factor G (Translational Gtpase), domain 3"/>
    <property type="match status" value="1"/>
</dbReference>
<dbReference type="Gene3D" id="3.40.50.300">
    <property type="entry name" value="P-loop containing nucleotide triphosphate hydrolases"/>
    <property type="match status" value="1"/>
</dbReference>
<dbReference type="Gene3D" id="2.40.30.10">
    <property type="entry name" value="Translation factors"/>
    <property type="match status" value="1"/>
</dbReference>
<dbReference type="HAMAP" id="MF_00071">
    <property type="entry name" value="LepA"/>
    <property type="match status" value="1"/>
</dbReference>
<dbReference type="InterPro" id="IPR006297">
    <property type="entry name" value="EF-4"/>
</dbReference>
<dbReference type="InterPro" id="IPR041095">
    <property type="entry name" value="EFG_II"/>
</dbReference>
<dbReference type="InterPro" id="IPR035647">
    <property type="entry name" value="EFG_III/V"/>
</dbReference>
<dbReference type="InterPro" id="IPR000640">
    <property type="entry name" value="EFG_V-like"/>
</dbReference>
<dbReference type="InterPro" id="IPR004161">
    <property type="entry name" value="EFTu-like_2"/>
</dbReference>
<dbReference type="InterPro" id="IPR031157">
    <property type="entry name" value="G_TR_CS"/>
</dbReference>
<dbReference type="InterPro" id="IPR038363">
    <property type="entry name" value="LepA_C_sf"/>
</dbReference>
<dbReference type="InterPro" id="IPR013842">
    <property type="entry name" value="LepA_CTD"/>
</dbReference>
<dbReference type="InterPro" id="IPR035654">
    <property type="entry name" value="LepA_IV"/>
</dbReference>
<dbReference type="InterPro" id="IPR027417">
    <property type="entry name" value="P-loop_NTPase"/>
</dbReference>
<dbReference type="InterPro" id="IPR005225">
    <property type="entry name" value="Small_GTP-bd"/>
</dbReference>
<dbReference type="InterPro" id="IPR000795">
    <property type="entry name" value="T_Tr_GTP-bd_dom"/>
</dbReference>
<dbReference type="InterPro" id="IPR009000">
    <property type="entry name" value="Transl_B-barrel_sf"/>
</dbReference>
<dbReference type="NCBIfam" id="TIGR01393">
    <property type="entry name" value="lepA"/>
    <property type="match status" value="1"/>
</dbReference>
<dbReference type="NCBIfam" id="TIGR00231">
    <property type="entry name" value="small_GTP"/>
    <property type="match status" value="1"/>
</dbReference>
<dbReference type="PANTHER" id="PTHR43512:SF4">
    <property type="entry name" value="TRANSLATION FACTOR GUF1 HOMOLOG, CHLOROPLASTIC"/>
    <property type="match status" value="1"/>
</dbReference>
<dbReference type="PANTHER" id="PTHR43512">
    <property type="entry name" value="TRANSLATION FACTOR GUF1-RELATED"/>
    <property type="match status" value="1"/>
</dbReference>
<dbReference type="Pfam" id="PF00679">
    <property type="entry name" value="EFG_C"/>
    <property type="match status" value="1"/>
</dbReference>
<dbReference type="Pfam" id="PF14492">
    <property type="entry name" value="EFG_III"/>
    <property type="match status" value="1"/>
</dbReference>
<dbReference type="Pfam" id="PF00009">
    <property type="entry name" value="GTP_EFTU"/>
    <property type="match status" value="1"/>
</dbReference>
<dbReference type="Pfam" id="PF03144">
    <property type="entry name" value="GTP_EFTU_D2"/>
    <property type="match status" value="1"/>
</dbReference>
<dbReference type="Pfam" id="PF06421">
    <property type="entry name" value="LepA_C"/>
    <property type="match status" value="1"/>
</dbReference>
<dbReference type="PRINTS" id="PR00315">
    <property type="entry name" value="ELONGATNFCT"/>
</dbReference>
<dbReference type="SMART" id="SM00838">
    <property type="entry name" value="EFG_C"/>
    <property type="match status" value="1"/>
</dbReference>
<dbReference type="SUPFAM" id="SSF54980">
    <property type="entry name" value="EF-G C-terminal domain-like"/>
    <property type="match status" value="2"/>
</dbReference>
<dbReference type="SUPFAM" id="SSF52540">
    <property type="entry name" value="P-loop containing nucleoside triphosphate hydrolases"/>
    <property type="match status" value="1"/>
</dbReference>
<dbReference type="SUPFAM" id="SSF50447">
    <property type="entry name" value="Translation proteins"/>
    <property type="match status" value="1"/>
</dbReference>
<dbReference type="PROSITE" id="PS00301">
    <property type="entry name" value="G_TR_1"/>
    <property type="match status" value="1"/>
</dbReference>
<dbReference type="PROSITE" id="PS51722">
    <property type="entry name" value="G_TR_2"/>
    <property type="match status" value="1"/>
</dbReference>
<accession>Q1IXW5</accession>
<sequence>MNVRNFSIIAHVDHGKSTLADRILERLGAMGERDKRDQTLDTLELERERGITIKSTPIRLTYRRANGEEYTFNLIDTPGHVDFGYEVSRSLAACEGVLLLVDASQGVEAQTIVNAYLAIDNNLEIIPVVNKIDLPAADPEGAAQELEEVIGIPAEEAVFASGKTGQGVDQILEAIVERIPPPPGDPQAPLKALIFDSFYDAYQGVILFVRVLEGTLKPKQKIMLFSNGKSFEVDKVGTFSPGLVVGDALSAGAVGWVAASIKDIHDAQVGDTITEKDRPTAEPFPGFKPAQPVVFSGLYPTDTEDYRKLREALEKLKLNDAAFTFEPETSEALGFGFRCGFLGLLHAEIVQERLEREFDLDLIATAPAVVYRVTLTNGEVFETQNPAEFPTRDRIARVEEPYIKLSIMLPEEYVGPVMQLLQERRGNMVTMNYVGKRVELIYEVPFAEILYDFHDRLKSISRGYASMDYEQIGYREGDLRKVDILVNGEVVDALAVIVHEDKAYSLGRKIVDKMAEVIPRQLFPVPVQAAIGGKIIARATVKAYRKDVLAKCYGGDITRKKKLLEKQKKGRARMKQIGTVEVPQEAFLAVLSTEE</sequence>
<comment type="function">
    <text evidence="1">Required for accurate and efficient protein synthesis under certain stress conditions. May act as a fidelity factor of the translation reaction, by catalyzing a one-codon backward translocation of tRNAs on improperly translocated ribosomes. Back-translocation proceeds from a post-translocation (POST) complex to a pre-translocation (PRE) complex, thus giving elongation factor G a second chance to translocate the tRNAs correctly. Binds to ribosomes in a GTP-dependent manner.</text>
</comment>
<comment type="catalytic activity">
    <reaction evidence="1">
        <text>GTP + H2O = GDP + phosphate + H(+)</text>
        <dbReference type="Rhea" id="RHEA:19669"/>
        <dbReference type="ChEBI" id="CHEBI:15377"/>
        <dbReference type="ChEBI" id="CHEBI:15378"/>
        <dbReference type="ChEBI" id="CHEBI:37565"/>
        <dbReference type="ChEBI" id="CHEBI:43474"/>
        <dbReference type="ChEBI" id="CHEBI:58189"/>
        <dbReference type="EC" id="3.6.5.n1"/>
    </reaction>
</comment>
<comment type="subcellular location">
    <subcellularLocation>
        <location evidence="1">Cell membrane</location>
        <topology evidence="1">Peripheral membrane protein</topology>
        <orientation evidence="1">Cytoplasmic side</orientation>
    </subcellularLocation>
</comment>
<comment type="similarity">
    <text evidence="1">Belongs to the TRAFAC class translation factor GTPase superfamily. Classic translation factor GTPase family. LepA subfamily.</text>
</comment>
<proteinExistence type="inferred from homology"/>
<feature type="chain" id="PRO_0000265652" description="Elongation factor 4">
    <location>
        <begin position="1"/>
        <end position="595"/>
    </location>
</feature>
<feature type="domain" description="tr-type G">
    <location>
        <begin position="1"/>
        <end position="183"/>
    </location>
</feature>
<feature type="binding site" evidence="1">
    <location>
        <begin position="13"/>
        <end position="18"/>
    </location>
    <ligand>
        <name>GTP</name>
        <dbReference type="ChEBI" id="CHEBI:37565"/>
    </ligand>
</feature>
<feature type="binding site" evidence="1">
    <location>
        <begin position="130"/>
        <end position="133"/>
    </location>
    <ligand>
        <name>GTP</name>
        <dbReference type="ChEBI" id="CHEBI:37565"/>
    </ligand>
</feature>
<name>LEPA_DEIGD</name>
<protein>
    <recommendedName>
        <fullName evidence="1">Elongation factor 4</fullName>
        <shortName evidence="1">EF-4</shortName>
        <ecNumber evidence="1">3.6.5.n1</ecNumber>
    </recommendedName>
    <alternativeName>
        <fullName evidence="1">Ribosomal back-translocase LepA</fullName>
    </alternativeName>
</protein>